<dbReference type="EC" id="5.4.2.10" evidence="1"/>
<dbReference type="EMBL" id="AM180252">
    <property type="protein sequence ID" value="CAJ54248.1"/>
    <property type="molecule type" value="Genomic_DNA"/>
</dbReference>
<dbReference type="RefSeq" id="WP_011526274.1">
    <property type="nucleotide sequence ID" value="NC_008011.1"/>
</dbReference>
<dbReference type="SMR" id="Q1MRX8"/>
<dbReference type="STRING" id="363253.LI0192"/>
<dbReference type="KEGG" id="lip:LI0192"/>
<dbReference type="eggNOG" id="COG1109">
    <property type="taxonomic scope" value="Bacteria"/>
</dbReference>
<dbReference type="HOGENOM" id="CLU_016950_7_0_7"/>
<dbReference type="OrthoDB" id="9806956at2"/>
<dbReference type="Proteomes" id="UP000002430">
    <property type="component" value="Chromosome"/>
</dbReference>
<dbReference type="GO" id="GO:0005829">
    <property type="term" value="C:cytosol"/>
    <property type="evidence" value="ECO:0007669"/>
    <property type="project" value="TreeGrafter"/>
</dbReference>
<dbReference type="GO" id="GO:0000287">
    <property type="term" value="F:magnesium ion binding"/>
    <property type="evidence" value="ECO:0007669"/>
    <property type="project" value="UniProtKB-UniRule"/>
</dbReference>
<dbReference type="GO" id="GO:0008966">
    <property type="term" value="F:phosphoglucosamine mutase activity"/>
    <property type="evidence" value="ECO:0007669"/>
    <property type="project" value="UniProtKB-UniRule"/>
</dbReference>
<dbReference type="GO" id="GO:0004615">
    <property type="term" value="F:phosphomannomutase activity"/>
    <property type="evidence" value="ECO:0007669"/>
    <property type="project" value="TreeGrafter"/>
</dbReference>
<dbReference type="GO" id="GO:0005975">
    <property type="term" value="P:carbohydrate metabolic process"/>
    <property type="evidence" value="ECO:0007669"/>
    <property type="project" value="InterPro"/>
</dbReference>
<dbReference type="GO" id="GO:0009252">
    <property type="term" value="P:peptidoglycan biosynthetic process"/>
    <property type="evidence" value="ECO:0007669"/>
    <property type="project" value="TreeGrafter"/>
</dbReference>
<dbReference type="GO" id="GO:0006048">
    <property type="term" value="P:UDP-N-acetylglucosamine biosynthetic process"/>
    <property type="evidence" value="ECO:0007669"/>
    <property type="project" value="TreeGrafter"/>
</dbReference>
<dbReference type="CDD" id="cd05802">
    <property type="entry name" value="GlmM"/>
    <property type="match status" value="1"/>
</dbReference>
<dbReference type="FunFam" id="3.30.310.50:FF:000001">
    <property type="entry name" value="Phosphoglucosamine mutase"/>
    <property type="match status" value="1"/>
</dbReference>
<dbReference type="FunFam" id="3.40.120.10:FF:000001">
    <property type="entry name" value="Phosphoglucosamine mutase"/>
    <property type="match status" value="1"/>
</dbReference>
<dbReference type="FunFam" id="3.40.120.10:FF:000002">
    <property type="entry name" value="Phosphoglucosamine mutase"/>
    <property type="match status" value="1"/>
</dbReference>
<dbReference type="Gene3D" id="3.40.120.10">
    <property type="entry name" value="Alpha-D-Glucose-1,6-Bisphosphate, subunit A, domain 3"/>
    <property type="match status" value="3"/>
</dbReference>
<dbReference type="Gene3D" id="3.30.310.50">
    <property type="entry name" value="Alpha-D-phosphohexomutase, C-terminal domain"/>
    <property type="match status" value="1"/>
</dbReference>
<dbReference type="HAMAP" id="MF_01554_B">
    <property type="entry name" value="GlmM_B"/>
    <property type="match status" value="1"/>
</dbReference>
<dbReference type="InterPro" id="IPR005844">
    <property type="entry name" value="A-D-PHexomutase_a/b/a-I"/>
</dbReference>
<dbReference type="InterPro" id="IPR016055">
    <property type="entry name" value="A-D-PHexomutase_a/b/a-I/II/III"/>
</dbReference>
<dbReference type="InterPro" id="IPR005845">
    <property type="entry name" value="A-D-PHexomutase_a/b/a-II"/>
</dbReference>
<dbReference type="InterPro" id="IPR005846">
    <property type="entry name" value="A-D-PHexomutase_a/b/a-III"/>
</dbReference>
<dbReference type="InterPro" id="IPR005843">
    <property type="entry name" value="A-D-PHexomutase_C"/>
</dbReference>
<dbReference type="InterPro" id="IPR036900">
    <property type="entry name" value="A-D-PHexomutase_C_sf"/>
</dbReference>
<dbReference type="InterPro" id="IPR016066">
    <property type="entry name" value="A-D-PHexomutase_CS"/>
</dbReference>
<dbReference type="InterPro" id="IPR005841">
    <property type="entry name" value="Alpha-D-phosphohexomutase_SF"/>
</dbReference>
<dbReference type="InterPro" id="IPR006352">
    <property type="entry name" value="GlmM_bact"/>
</dbReference>
<dbReference type="InterPro" id="IPR050060">
    <property type="entry name" value="Phosphoglucosamine_mutase"/>
</dbReference>
<dbReference type="NCBIfam" id="TIGR01455">
    <property type="entry name" value="glmM"/>
    <property type="match status" value="1"/>
</dbReference>
<dbReference type="NCBIfam" id="NF008139">
    <property type="entry name" value="PRK10887.1"/>
    <property type="match status" value="1"/>
</dbReference>
<dbReference type="PANTHER" id="PTHR42946:SF1">
    <property type="entry name" value="PHOSPHOGLUCOMUTASE (ALPHA-D-GLUCOSE-1,6-BISPHOSPHATE-DEPENDENT)"/>
    <property type="match status" value="1"/>
</dbReference>
<dbReference type="PANTHER" id="PTHR42946">
    <property type="entry name" value="PHOSPHOHEXOSE MUTASE"/>
    <property type="match status" value="1"/>
</dbReference>
<dbReference type="Pfam" id="PF02878">
    <property type="entry name" value="PGM_PMM_I"/>
    <property type="match status" value="1"/>
</dbReference>
<dbReference type="Pfam" id="PF02879">
    <property type="entry name" value="PGM_PMM_II"/>
    <property type="match status" value="1"/>
</dbReference>
<dbReference type="Pfam" id="PF02880">
    <property type="entry name" value="PGM_PMM_III"/>
    <property type="match status" value="1"/>
</dbReference>
<dbReference type="Pfam" id="PF00408">
    <property type="entry name" value="PGM_PMM_IV"/>
    <property type="match status" value="1"/>
</dbReference>
<dbReference type="PRINTS" id="PR00509">
    <property type="entry name" value="PGMPMM"/>
</dbReference>
<dbReference type="SUPFAM" id="SSF55957">
    <property type="entry name" value="Phosphoglucomutase, C-terminal domain"/>
    <property type="match status" value="1"/>
</dbReference>
<dbReference type="SUPFAM" id="SSF53738">
    <property type="entry name" value="Phosphoglucomutase, first 3 domains"/>
    <property type="match status" value="3"/>
</dbReference>
<dbReference type="PROSITE" id="PS00710">
    <property type="entry name" value="PGM_PMM"/>
    <property type="match status" value="1"/>
</dbReference>
<comment type="function">
    <text evidence="1">Catalyzes the conversion of glucosamine-6-phosphate to glucosamine-1-phosphate.</text>
</comment>
<comment type="catalytic activity">
    <reaction evidence="1">
        <text>alpha-D-glucosamine 1-phosphate = D-glucosamine 6-phosphate</text>
        <dbReference type="Rhea" id="RHEA:23424"/>
        <dbReference type="ChEBI" id="CHEBI:58516"/>
        <dbReference type="ChEBI" id="CHEBI:58725"/>
        <dbReference type="EC" id="5.4.2.10"/>
    </reaction>
</comment>
<comment type="cofactor">
    <cofactor evidence="1">
        <name>Mg(2+)</name>
        <dbReference type="ChEBI" id="CHEBI:18420"/>
    </cofactor>
    <text evidence="1">Binds 1 Mg(2+) ion per subunit.</text>
</comment>
<comment type="PTM">
    <text evidence="1">Activated by phosphorylation.</text>
</comment>
<comment type="similarity">
    <text evidence="1">Belongs to the phosphohexose mutase family.</text>
</comment>
<accession>Q1MRX8</accession>
<organism>
    <name type="scientific">Lawsonia intracellularis (strain PHE/MN1-00)</name>
    <dbReference type="NCBI Taxonomy" id="363253"/>
    <lineage>
        <taxon>Bacteria</taxon>
        <taxon>Pseudomonadati</taxon>
        <taxon>Thermodesulfobacteriota</taxon>
        <taxon>Desulfovibrionia</taxon>
        <taxon>Desulfovibrionales</taxon>
        <taxon>Desulfovibrionaceae</taxon>
        <taxon>Lawsonia</taxon>
    </lineage>
</organism>
<reference key="1">
    <citation type="submission" date="2005-11" db="EMBL/GenBank/DDBJ databases">
        <title>The complete genome sequence of Lawsonia intracellularis: the causative agent of proliferative enteropathy.</title>
        <authorList>
            <person name="Kaur K."/>
            <person name="Zhang Q."/>
            <person name="Beckler D."/>
            <person name="Munir S."/>
            <person name="Li L."/>
            <person name="Kinsley K."/>
            <person name="Herron L."/>
            <person name="Peterson A."/>
            <person name="May B."/>
            <person name="Singh S."/>
            <person name="Gebhart C."/>
            <person name="Kapur V."/>
        </authorList>
    </citation>
    <scope>NUCLEOTIDE SEQUENCE [LARGE SCALE GENOMIC DNA]</scope>
    <source>
        <strain>PHE/MN1-00</strain>
    </source>
</reference>
<proteinExistence type="inferred from homology"/>
<feature type="chain" id="PRO_0000301333" description="Phosphoglucosamine mutase">
    <location>
        <begin position="1"/>
        <end position="451"/>
    </location>
</feature>
<feature type="active site" description="Phosphoserine intermediate" evidence="1">
    <location>
        <position position="102"/>
    </location>
</feature>
<feature type="binding site" description="via phosphate group" evidence="1">
    <location>
        <position position="102"/>
    </location>
    <ligand>
        <name>Mg(2+)</name>
        <dbReference type="ChEBI" id="CHEBI:18420"/>
    </ligand>
</feature>
<feature type="binding site" evidence="1">
    <location>
        <position position="244"/>
    </location>
    <ligand>
        <name>Mg(2+)</name>
        <dbReference type="ChEBI" id="CHEBI:18420"/>
    </ligand>
</feature>
<feature type="binding site" evidence="1">
    <location>
        <position position="246"/>
    </location>
    <ligand>
        <name>Mg(2+)</name>
        <dbReference type="ChEBI" id="CHEBI:18420"/>
    </ligand>
</feature>
<feature type="binding site" evidence="1">
    <location>
        <position position="248"/>
    </location>
    <ligand>
        <name>Mg(2+)</name>
        <dbReference type="ChEBI" id="CHEBI:18420"/>
    </ligand>
</feature>
<feature type="modified residue" description="Phosphoserine" evidence="1">
    <location>
        <position position="102"/>
    </location>
</feature>
<gene>
    <name evidence="1" type="primary">glmM</name>
    <name type="ordered locus">LI0192</name>
</gene>
<keyword id="KW-0413">Isomerase</keyword>
<keyword id="KW-0460">Magnesium</keyword>
<keyword id="KW-0479">Metal-binding</keyword>
<keyword id="KW-0597">Phosphoprotein</keyword>
<keyword id="KW-1185">Reference proteome</keyword>
<name>GLMM_LAWIP</name>
<protein>
    <recommendedName>
        <fullName evidence="1">Phosphoglucosamine mutase</fullName>
        <ecNumber evidence="1">5.4.2.10</ecNumber>
    </recommendedName>
</protein>
<sequence>MGKKLFGTDGLRGRVNIYPMTPEVALRLGLAAGTYYRRKSHRSRVVIGKDTRISGYIFENALTAGLLASGMDVFLVGPLPTPAVSFLTANMRADFGVVISASHNPFYDNGIKLFDADGFKIPDKAEHKISEMILDQSHTWDYPDPSSVGRAHKIKDALGRYIVYLKNTFPSTLSLEGLRIVLDCANGANYKVAPLALEELGAELIKIGTDPNGLNINHQCGSLFPEYVAKKVIEMRADIGLALDGDADRLIVVDEKGIILNGDQIMALCAQDLMRQNKLPGNILVATVMSNMALEVFMKEKKGALIRSNVGDRYVMEAMRKHGAMFGGEQSGHLIFREYSNTGDGLLAALQILRIMKQYERPLSSLAGLLQLFPQRLINVNVKQKRPIETMPTLLKTIQRIETAFSGRGRVLLRYSGTEPLCRVMVEGESDSKVNTYAEELADIVAKSLAE</sequence>
<evidence type="ECO:0000255" key="1">
    <source>
        <dbReference type="HAMAP-Rule" id="MF_01554"/>
    </source>
</evidence>